<name>VM2B_CRAGM</name>
<evidence type="ECO:0000250" key="1"/>
<evidence type="ECO:0000250" key="2">
    <source>
        <dbReference type="UniProtKB" id="Q0NZX5"/>
    </source>
</evidence>
<evidence type="ECO:0000255" key="3">
    <source>
        <dbReference type="PROSITE-ProRule" id="PRU00068"/>
    </source>
</evidence>
<evidence type="ECO:0000269" key="4">
    <source>
    </source>
</evidence>
<evidence type="ECO:0000305" key="5"/>
<reference key="1">
    <citation type="journal article" date="1990" name="Proc. Natl. Acad. Sci. U.S.A.">
        <title>Platelet glycoprotein IIb-IIIa protein antagonists from snake venoms: evidence for a family of platelet-aggregation inhibitors.</title>
        <authorList>
            <person name="Dennis M.S."/>
            <person name="Henzel W.J."/>
            <person name="Pitti R.M."/>
            <person name="Lipari M.T."/>
            <person name="Napier M.A."/>
            <person name="Deisher T.A."/>
            <person name="Bunting S."/>
            <person name="Lazarus R.A."/>
        </authorList>
    </citation>
    <scope>PROTEIN SEQUENCE</scope>
    <scope>FUNCTION</scope>
    <source>
        <tissue>Venom</tissue>
    </source>
</reference>
<feature type="chain" id="PRO_0000045889" description="Disintegrin trigramin-beta-2">
    <location>
        <begin position="1"/>
        <end position="73"/>
    </location>
</feature>
<feature type="chain" id="PRO_0000045890" description="Disintegrin trigramin-beta-1">
    <location>
        <begin position="1"/>
        <end position="72"/>
    </location>
</feature>
<feature type="domain" description="Disintegrin" evidence="3">
    <location>
        <begin position="1"/>
        <end position="73"/>
    </location>
</feature>
<feature type="short sequence motif" description="Cell attachment site">
    <location>
        <begin position="51"/>
        <end position="53"/>
    </location>
</feature>
<feature type="disulfide bond" evidence="2">
    <location>
        <begin position="6"/>
        <end position="21"/>
    </location>
</feature>
<feature type="disulfide bond" evidence="2">
    <location>
        <begin position="8"/>
        <end position="16"/>
    </location>
</feature>
<feature type="disulfide bond" evidence="2">
    <location>
        <begin position="15"/>
        <end position="38"/>
    </location>
</feature>
<feature type="disulfide bond" evidence="2">
    <location>
        <begin position="29"/>
        <end position="35"/>
    </location>
</feature>
<feature type="disulfide bond" evidence="2">
    <location>
        <begin position="34"/>
        <end position="59"/>
    </location>
</feature>
<feature type="disulfide bond" evidence="2 3">
    <location>
        <begin position="47"/>
        <end position="66"/>
    </location>
</feature>
<dbReference type="PIR" id="D35982">
    <property type="entry name" value="D35982"/>
</dbReference>
<dbReference type="SMR" id="P17495"/>
<dbReference type="ELM" id="P17495"/>
<dbReference type="GO" id="GO:0005576">
    <property type="term" value="C:extracellular region"/>
    <property type="evidence" value="ECO:0007669"/>
    <property type="project" value="UniProtKB-SubCell"/>
</dbReference>
<dbReference type="GO" id="GO:0090729">
    <property type="term" value="F:toxin activity"/>
    <property type="evidence" value="ECO:0007669"/>
    <property type="project" value="UniProtKB-KW"/>
</dbReference>
<dbReference type="FunFam" id="4.10.70.10:FF:000005">
    <property type="entry name" value="Zinc metalloproteinase/disintegrin"/>
    <property type="match status" value="1"/>
</dbReference>
<dbReference type="Gene3D" id="4.10.70.10">
    <property type="entry name" value="Disintegrin domain"/>
    <property type="match status" value="1"/>
</dbReference>
<dbReference type="InterPro" id="IPR018358">
    <property type="entry name" value="Disintegrin_CS"/>
</dbReference>
<dbReference type="InterPro" id="IPR001762">
    <property type="entry name" value="Disintegrin_dom"/>
</dbReference>
<dbReference type="InterPro" id="IPR036436">
    <property type="entry name" value="Disintegrin_dom_sf"/>
</dbReference>
<dbReference type="PANTHER" id="PTHR11905">
    <property type="entry name" value="ADAM A DISINTEGRIN AND METALLOPROTEASE DOMAIN"/>
    <property type="match status" value="1"/>
</dbReference>
<dbReference type="PANTHER" id="PTHR11905:SF159">
    <property type="entry name" value="ADAM METALLOPROTEASE"/>
    <property type="match status" value="1"/>
</dbReference>
<dbReference type="Pfam" id="PF00200">
    <property type="entry name" value="Disintegrin"/>
    <property type="match status" value="1"/>
</dbReference>
<dbReference type="PRINTS" id="PR00289">
    <property type="entry name" value="DISINTEGRIN"/>
</dbReference>
<dbReference type="SMART" id="SM00050">
    <property type="entry name" value="DISIN"/>
    <property type="match status" value="1"/>
</dbReference>
<dbReference type="SUPFAM" id="SSF57552">
    <property type="entry name" value="Blood coagulation inhibitor (disintegrin)"/>
    <property type="match status" value="1"/>
</dbReference>
<dbReference type="PROSITE" id="PS00427">
    <property type="entry name" value="DISINTEGRIN_1"/>
    <property type="match status" value="1"/>
</dbReference>
<dbReference type="PROSITE" id="PS50214">
    <property type="entry name" value="DISINTEGRIN_2"/>
    <property type="match status" value="1"/>
</dbReference>
<comment type="function">
    <text evidence="4">Inhibits fibrinogen interaction with platelets. Acts by binding to the alpha-IIb/beta-3 receptor (ITGA2B/ITGB3) on the platelet surface and inhibits aggregation induced by ADP, thrombin, platelet-activating factor and collagen.</text>
</comment>
<comment type="subunit">
    <text evidence="1">Monomer (disintegrin).</text>
</comment>
<comment type="subcellular location">
    <subcellularLocation>
        <location>Secreted</location>
    </subcellularLocation>
</comment>
<comment type="tissue specificity">
    <text>Expressed by the venom gland.</text>
</comment>
<comment type="miscellaneous">
    <text>The disintegrin belongs to the medium disintegrin subfamily.</text>
</comment>
<comment type="similarity">
    <text evidence="5">Belongs to the venom metalloproteinase (M12B) family. P-II subfamily. P-IIa sub-subfamily.</text>
</comment>
<keyword id="KW-1217">Cell adhesion impairing toxin</keyword>
<keyword id="KW-0903">Direct protein sequencing</keyword>
<keyword id="KW-1015">Disulfide bond</keyword>
<keyword id="KW-1199">Hemostasis impairing toxin</keyword>
<keyword id="KW-1201">Platelet aggregation inhibiting toxin</keyword>
<keyword id="KW-0964">Secreted</keyword>
<keyword id="KW-0800">Toxin</keyword>
<organism>
    <name type="scientific">Craspedocephalus gramineus</name>
    <name type="common">Bamboo pit viper</name>
    <name type="synonym">Trimeresurus gramineus</name>
    <dbReference type="NCBI Taxonomy" id="8767"/>
    <lineage>
        <taxon>Eukaryota</taxon>
        <taxon>Metazoa</taxon>
        <taxon>Chordata</taxon>
        <taxon>Craniata</taxon>
        <taxon>Vertebrata</taxon>
        <taxon>Euteleostomi</taxon>
        <taxon>Lepidosauria</taxon>
        <taxon>Squamata</taxon>
        <taxon>Bifurcata</taxon>
        <taxon>Unidentata</taxon>
        <taxon>Episquamata</taxon>
        <taxon>Toxicofera</taxon>
        <taxon>Serpentes</taxon>
        <taxon>Colubroidea</taxon>
        <taxon>Viperidae</taxon>
        <taxon>Crotalinae</taxon>
        <taxon>Craspedocephalus</taxon>
    </lineage>
</organism>
<sequence length="73" mass="7634">EAGKDCDCGSPANPCCDAATCKLLPGAQCGEGPCCDQCSFMKKGTICRRARGDDLDDYCNGRSAGCPRNPFHA</sequence>
<accession>P17495</accession>
<proteinExistence type="evidence at protein level"/>
<protein>
    <recommendedName>
        <fullName>Disintegrin trigramin-beta-2</fullName>
    </recommendedName>
    <alternativeName>
        <fullName>Platelet aggregation activation inhibitor</fullName>
    </alternativeName>
    <component>
        <recommendedName>
            <fullName>Disintegrin trigramin-beta-1</fullName>
        </recommendedName>
    </component>
</protein>